<keyword id="KW-0963">Cytoplasm</keyword>
<keyword id="KW-0251">Elongation factor</keyword>
<keyword id="KW-0342">GTP-binding</keyword>
<keyword id="KW-0378">Hydrolase</keyword>
<keyword id="KW-0460">Magnesium</keyword>
<keyword id="KW-0479">Metal-binding</keyword>
<keyword id="KW-0547">Nucleotide-binding</keyword>
<keyword id="KW-0648">Protein biosynthesis</keyword>
<organism>
    <name type="scientific">Streptococcus pyogenes serotype M28 (strain MGAS6180)</name>
    <dbReference type="NCBI Taxonomy" id="319701"/>
    <lineage>
        <taxon>Bacteria</taxon>
        <taxon>Bacillati</taxon>
        <taxon>Bacillota</taxon>
        <taxon>Bacilli</taxon>
        <taxon>Lactobacillales</taxon>
        <taxon>Streptococcaceae</taxon>
        <taxon>Streptococcus</taxon>
    </lineage>
</organism>
<dbReference type="EC" id="3.6.5.3" evidence="2"/>
<dbReference type="EMBL" id="CP000056">
    <property type="protein sequence ID" value="AAX71601.1"/>
    <property type="status" value="ALT_INIT"/>
    <property type="molecule type" value="Genomic_DNA"/>
</dbReference>
<dbReference type="RefSeq" id="WP_002990541.1">
    <property type="nucleotide sequence ID" value="NC_007296.2"/>
</dbReference>
<dbReference type="SMR" id="Q48UK5"/>
<dbReference type="KEGG" id="spb:M28_Spy0487"/>
<dbReference type="HOGENOM" id="CLU_007265_0_1_9"/>
<dbReference type="GO" id="GO:0005829">
    <property type="term" value="C:cytosol"/>
    <property type="evidence" value="ECO:0007669"/>
    <property type="project" value="TreeGrafter"/>
</dbReference>
<dbReference type="GO" id="GO:0005525">
    <property type="term" value="F:GTP binding"/>
    <property type="evidence" value="ECO:0007669"/>
    <property type="project" value="UniProtKB-UniRule"/>
</dbReference>
<dbReference type="GO" id="GO:0003924">
    <property type="term" value="F:GTPase activity"/>
    <property type="evidence" value="ECO:0007669"/>
    <property type="project" value="InterPro"/>
</dbReference>
<dbReference type="GO" id="GO:0003746">
    <property type="term" value="F:translation elongation factor activity"/>
    <property type="evidence" value="ECO:0007669"/>
    <property type="project" value="UniProtKB-UniRule"/>
</dbReference>
<dbReference type="CDD" id="cd01884">
    <property type="entry name" value="EF_Tu"/>
    <property type="match status" value="1"/>
</dbReference>
<dbReference type="CDD" id="cd03697">
    <property type="entry name" value="EFTU_II"/>
    <property type="match status" value="1"/>
</dbReference>
<dbReference type="CDD" id="cd03707">
    <property type="entry name" value="EFTU_III"/>
    <property type="match status" value="1"/>
</dbReference>
<dbReference type="FunFam" id="2.40.30.10:FF:000001">
    <property type="entry name" value="Elongation factor Tu"/>
    <property type="match status" value="1"/>
</dbReference>
<dbReference type="FunFam" id="3.40.50.300:FF:000003">
    <property type="entry name" value="Elongation factor Tu"/>
    <property type="match status" value="1"/>
</dbReference>
<dbReference type="Gene3D" id="3.40.50.300">
    <property type="entry name" value="P-loop containing nucleotide triphosphate hydrolases"/>
    <property type="match status" value="1"/>
</dbReference>
<dbReference type="Gene3D" id="2.40.30.10">
    <property type="entry name" value="Translation factors"/>
    <property type="match status" value="2"/>
</dbReference>
<dbReference type="HAMAP" id="MF_00118_B">
    <property type="entry name" value="EF_Tu_B"/>
    <property type="match status" value="1"/>
</dbReference>
<dbReference type="InterPro" id="IPR041709">
    <property type="entry name" value="EF-Tu_GTP-bd"/>
</dbReference>
<dbReference type="InterPro" id="IPR050055">
    <property type="entry name" value="EF-Tu_GTPase"/>
</dbReference>
<dbReference type="InterPro" id="IPR004161">
    <property type="entry name" value="EFTu-like_2"/>
</dbReference>
<dbReference type="InterPro" id="IPR033720">
    <property type="entry name" value="EFTU_2"/>
</dbReference>
<dbReference type="InterPro" id="IPR031157">
    <property type="entry name" value="G_TR_CS"/>
</dbReference>
<dbReference type="InterPro" id="IPR027417">
    <property type="entry name" value="P-loop_NTPase"/>
</dbReference>
<dbReference type="InterPro" id="IPR005225">
    <property type="entry name" value="Small_GTP-bd"/>
</dbReference>
<dbReference type="InterPro" id="IPR000795">
    <property type="entry name" value="T_Tr_GTP-bd_dom"/>
</dbReference>
<dbReference type="InterPro" id="IPR009000">
    <property type="entry name" value="Transl_B-barrel_sf"/>
</dbReference>
<dbReference type="InterPro" id="IPR009001">
    <property type="entry name" value="Transl_elong_EF1A/Init_IF2_C"/>
</dbReference>
<dbReference type="InterPro" id="IPR004541">
    <property type="entry name" value="Transl_elong_EFTu/EF1A_bac/org"/>
</dbReference>
<dbReference type="InterPro" id="IPR004160">
    <property type="entry name" value="Transl_elong_EFTu/EF1A_C"/>
</dbReference>
<dbReference type="NCBIfam" id="TIGR00485">
    <property type="entry name" value="EF-Tu"/>
    <property type="match status" value="1"/>
</dbReference>
<dbReference type="NCBIfam" id="NF000766">
    <property type="entry name" value="PRK00049.1"/>
    <property type="match status" value="1"/>
</dbReference>
<dbReference type="NCBIfam" id="NF009372">
    <property type="entry name" value="PRK12735.1"/>
    <property type="match status" value="1"/>
</dbReference>
<dbReference type="NCBIfam" id="NF009373">
    <property type="entry name" value="PRK12736.1"/>
    <property type="match status" value="1"/>
</dbReference>
<dbReference type="NCBIfam" id="TIGR00231">
    <property type="entry name" value="small_GTP"/>
    <property type="match status" value="1"/>
</dbReference>
<dbReference type="PANTHER" id="PTHR43721:SF22">
    <property type="entry name" value="ELONGATION FACTOR TU, MITOCHONDRIAL"/>
    <property type="match status" value="1"/>
</dbReference>
<dbReference type="PANTHER" id="PTHR43721">
    <property type="entry name" value="ELONGATION FACTOR TU-RELATED"/>
    <property type="match status" value="1"/>
</dbReference>
<dbReference type="Pfam" id="PF00009">
    <property type="entry name" value="GTP_EFTU"/>
    <property type="match status" value="1"/>
</dbReference>
<dbReference type="Pfam" id="PF03144">
    <property type="entry name" value="GTP_EFTU_D2"/>
    <property type="match status" value="1"/>
</dbReference>
<dbReference type="Pfam" id="PF03143">
    <property type="entry name" value="GTP_EFTU_D3"/>
    <property type="match status" value="1"/>
</dbReference>
<dbReference type="PRINTS" id="PR00315">
    <property type="entry name" value="ELONGATNFCT"/>
</dbReference>
<dbReference type="SUPFAM" id="SSF50465">
    <property type="entry name" value="EF-Tu/eEF-1alpha/eIF2-gamma C-terminal domain"/>
    <property type="match status" value="1"/>
</dbReference>
<dbReference type="SUPFAM" id="SSF52540">
    <property type="entry name" value="P-loop containing nucleoside triphosphate hydrolases"/>
    <property type="match status" value="1"/>
</dbReference>
<dbReference type="SUPFAM" id="SSF50447">
    <property type="entry name" value="Translation proteins"/>
    <property type="match status" value="1"/>
</dbReference>
<dbReference type="PROSITE" id="PS00301">
    <property type="entry name" value="G_TR_1"/>
    <property type="match status" value="1"/>
</dbReference>
<dbReference type="PROSITE" id="PS51722">
    <property type="entry name" value="G_TR_2"/>
    <property type="match status" value="1"/>
</dbReference>
<feature type="chain" id="PRO_0000337553" description="Elongation factor Tu">
    <location>
        <begin position="1"/>
        <end position="398"/>
    </location>
</feature>
<feature type="domain" description="tr-type G">
    <location>
        <begin position="10"/>
        <end position="207"/>
    </location>
</feature>
<feature type="region of interest" description="G1" evidence="1">
    <location>
        <begin position="19"/>
        <end position="26"/>
    </location>
</feature>
<feature type="region of interest" description="G2" evidence="1">
    <location>
        <begin position="63"/>
        <end position="67"/>
    </location>
</feature>
<feature type="region of interest" description="G3" evidence="1">
    <location>
        <begin position="84"/>
        <end position="87"/>
    </location>
</feature>
<feature type="region of interest" description="G4" evidence="1">
    <location>
        <begin position="139"/>
        <end position="142"/>
    </location>
</feature>
<feature type="region of interest" description="G5" evidence="1">
    <location>
        <begin position="177"/>
        <end position="179"/>
    </location>
</feature>
<feature type="binding site" evidence="2">
    <location>
        <begin position="19"/>
        <end position="26"/>
    </location>
    <ligand>
        <name>GTP</name>
        <dbReference type="ChEBI" id="CHEBI:37565"/>
    </ligand>
</feature>
<feature type="binding site" evidence="2">
    <location>
        <position position="26"/>
    </location>
    <ligand>
        <name>Mg(2+)</name>
        <dbReference type="ChEBI" id="CHEBI:18420"/>
    </ligand>
</feature>
<feature type="binding site" evidence="2">
    <location>
        <begin position="84"/>
        <end position="88"/>
    </location>
    <ligand>
        <name>GTP</name>
        <dbReference type="ChEBI" id="CHEBI:37565"/>
    </ligand>
</feature>
<feature type="binding site" evidence="2">
    <location>
        <begin position="139"/>
        <end position="142"/>
    </location>
    <ligand>
        <name>GTP</name>
        <dbReference type="ChEBI" id="CHEBI:37565"/>
    </ligand>
</feature>
<proteinExistence type="inferred from homology"/>
<gene>
    <name evidence="2" type="primary">tuf</name>
    <name type="ordered locus">M28_Spy0487</name>
</gene>
<accession>Q48UK5</accession>
<name>EFTU_STRPM</name>
<sequence length="398" mass="43826">MAKEKYDRSKPHVNIGTIGHVDHGKTTLTAAITTVLARRLPSSVNQPKDYASIDAAPEERERGITINTAHVEYETATRHYAHIDAPGHADYVKNMITGAAQMDGAILVVASTDGPMPQTREHILLSRQVGVKHLIVFMNKVDLVDDEELLELVEMEIRDLLSEYDFPGDDLPVIQGSALKALEGDTKFEDIIMELMDTVDSYIPEPERDTDKPLLLPVEDVFSITGRGTVASGRIDRGTVRVNDEIEIVGIKEETKKAVVTGVEMFRKQLDEGLAGDNVGILLRGVQRDEIERGQVIAKPGSINPHTKFKGEVYILSKDEGGRHTPFFNNYRPQFYFRTTDVTGSIELPAGTEMVMPGDNVTINVELIHPIAVEQGTTFSIREGGRTVGSGIVSEIEA</sequence>
<protein>
    <recommendedName>
        <fullName evidence="2">Elongation factor Tu</fullName>
        <shortName evidence="2">EF-Tu</shortName>
        <ecNumber evidence="2">3.6.5.3</ecNumber>
    </recommendedName>
</protein>
<reference key="1">
    <citation type="journal article" date="2005" name="J. Infect. Dis.">
        <title>Genome sequence of a serotype M28 strain of group A Streptococcus: potential new insights into puerperal sepsis and bacterial disease specificity.</title>
        <authorList>
            <person name="Green N.M."/>
            <person name="Zhang S."/>
            <person name="Porcella S.F."/>
            <person name="Nagiec M.J."/>
            <person name="Barbian K.D."/>
            <person name="Beres S.B."/>
            <person name="Lefebvre R.B."/>
            <person name="Musser J.M."/>
        </authorList>
    </citation>
    <scope>NUCLEOTIDE SEQUENCE [LARGE SCALE GENOMIC DNA]</scope>
    <source>
        <strain>MGAS6180</strain>
    </source>
</reference>
<evidence type="ECO:0000250" key="1"/>
<evidence type="ECO:0000255" key="2">
    <source>
        <dbReference type="HAMAP-Rule" id="MF_00118"/>
    </source>
</evidence>
<evidence type="ECO:0000305" key="3"/>
<comment type="function">
    <text evidence="2">GTP hydrolase that promotes the GTP-dependent binding of aminoacyl-tRNA to the A-site of ribosomes during protein biosynthesis.</text>
</comment>
<comment type="catalytic activity">
    <reaction evidence="2">
        <text>GTP + H2O = GDP + phosphate + H(+)</text>
        <dbReference type="Rhea" id="RHEA:19669"/>
        <dbReference type="ChEBI" id="CHEBI:15377"/>
        <dbReference type="ChEBI" id="CHEBI:15378"/>
        <dbReference type="ChEBI" id="CHEBI:37565"/>
        <dbReference type="ChEBI" id="CHEBI:43474"/>
        <dbReference type="ChEBI" id="CHEBI:58189"/>
        <dbReference type="EC" id="3.6.5.3"/>
    </reaction>
    <physiologicalReaction direction="left-to-right" evidence="2">
        <dbReference type="Rhea" id="RHEA:19670"/>
    </physiologicalReaction>
</comment>
<comment type="subunit">
    <text evidence="2">Monomer.</text>
</comment>
<comment type="subcellular location">
    <subcellularLocation>
        <location evidence="2">Cytoplasm</location>
    </subcellularLocation>
</comment>
<comment type="similarity">
    <text evidence="2">Belongs to the TRAFAC class translation factor GTPase superfamily. Classic translation factor GTPase family. EF-Tu/EF-1A subfamily.</text>
</comment>
<comment type="sequence caution" evidence="3">
    <conflict type="erroneous initiation">
        <sequence resource="EMBL-CDS" id="AAX71601"/>
    </conflict>
</comment>